<keyword id="KW-0961">Cell wall biogenesis/degradation</keyword>
<keyword id="KW-0135">Cellulose biosynthesis</keyword>
<keyword id="KW-0325">Glycoprotein</keyword>
<keyword id="KW-0328">Glycosyltransferase</keyword>
<keyword id="KW-0472">Membrane</keyword>
<keyword id="KW-1185">Reference proteome</keyword>
<keyword id="KW-0735">Signal-anchor</keyword>
<keyword id="KW-0808">Transferase</keyword>
<keyword id="KW-0812">Transmembrane</keyword>
<keyword id="KW-1133">Transmembrane helix</keyword>
<comment type="function">
    <text evidence="2 3">Glycosyltransferase required for the regulation of cellulose biosynthesis in the cell wall (PubMed:18939965, PubMed:27708650). Required for the biosynthesis of hexoses (glucose, mannose and galactose) in both cellulosic and non-cellulosic (pectins and hemicelluloses) components of cell walls (PubMed:27708650). Required for the formation of arabinogalactan proteins which contribute to the strengthening of cell walls (PubMed:18939965). Possesses low glycosyltransferase activity (PubMed:18939965).</text>
</comment>
<comment type="subcellular location">
    <subcellularLocation>
        <location evidence="2">Membrane</location>
        <topology evidence="2">Single-pass type II membrane protein</topology>
    </subcellularLocation>
    <text evidence="2">Localizes in punctuate patterns.</text>
</comment>
<comment type="tissue specificity">
    <text evidence="2">Expressed in roots, culms, leaves and panicles (PubMed:18939965). Expressed in vascular bundles of leaf sheaths and stems where sclerenchyma cells are developing (PubMed:18939965). Expressed in mechanical tissues of young organs, such as young leaf sheaths, stems and tiller buds (PubMed:18939965).</text>
</comment>
<comment type="disruption phenotype">
    <text evidence="2">Retarded growth and reduced mechanical strength (brittleness) due to reduced cell wall thickness in sclerenchyma and bundle sheath fiber cells.</text>
</comment>
<comment type="similarity">
    <text evidence="6">Belongs to the glycosyltransferase 14 family.</text>
</comment>
<protein>
    <recommendedName>
        <fullName evidence="6">Glycosyltransferase BC10</fullName>
        <ecNumber evidence="2">2.4.-.-</ecNumber>
    </recommendedName>
    <alternativeName>
        <fullName evidence="4">Protein BRITTLE CULM 10</fullName>
    </alternativeName>
    <alternativeName>
        <fullName evidence="5">Protein FRAGILE CULM 116</fullName>
    </alternativeName>
</protein>
<accession>Q65XS5</accession>
<evidence type="ECO:0000255" key="1">
    <source>
        <dbReference type="PROSITE-ProRule" id="PRU00498"/>
    </source>
</evidence>
<evidence type="ECO:0000269" key="2">
    <source>
    </source>
</evidence>
<evidence type="ECO:0000269" key="3">
    <source>
    </source>
</evidence>
<evidence type="ECO:0000303" key="4">
    <source>
    </source>
</evidence>
<evidence type="ECO:0000303" key="5">
    <source>
    </source>
</evidence>
<evidence type="ECO:0000305" key="6"/>
<evidence type="ECO:0000305" key="7">
    <source>
    </source>
</evidence>
<evidence type="ECO:0000312" key="8">
    <source>
        <dbReference type="EMBL" id="AAU44326.1"/>
    </source>
</evidence>
<evidence type="ECO:0000312" key="9">
    <source>
        <dbReference type="EMBL" id="BAF16680.1"/>
    </source>
</evidence>
<evidence type="ECO:0000312" key="10">
    <source>
        <dbReference type="EMBL" id="EEE62484.1"/>
    </source>
</evidence>
<dbReference type="EC" id="2.4.-.-" evidence="2"/>
<dbReference type="EMBL" id="EF140884">
    <property type="protein sequence ID" value="ABN72585.1"/>
    <property type="molecule type" value="Genomic_DNA"/>
</dbReference>
<dbReference type="EMBL" id="AC087553">
    <property type="protein sequence ID" value="AAU44326.1"/>
    <property type="molecule type" value="Genomic_DNA"/>
</dbReference>
<dbReference type="EMBL" id="AP008211">
    <property type="protein sequence ID" value="BAF16680.1"/>
    <property type="molecule type" value="Genomic_DNA"/>
</dbReference>
<dbReference type="EMBL" id="AP014961">
    <property type="protein sequence ID" value="BAS92477.1"/>
    <property type="molecule type" value="Genomic_DNA"/>
</dbReference>
<dbReference type="EMBL" id="CM000142">
    <property type="protein sequence ID" value="EEE62484.1"/>
    <property type="molecule type" value="Genomic_DNA"/>
</dbReference>
<dbReference type="EMBL" id="AK100216">
    <property type="protein sequence ID" value="BAG94494.1"/>
    <property type="molecule type" value="mRNA"/>
</dbReference>
<dbReference type="EMBL" id="AK103412">
    <property type="protein sequence ID" value="BAG96067.1"/>
    <property type="molecule type" value="mRNA"/>
</dbReference>
<dbReference type="FunCoup" id="Q65XS5">
    <property type="interactions" value="618"/>
</dbReference>
<dbReference type="STRING" id="39947.Q65XS5"/>
<dbReference type="GlyCosmos" id="Q65XS5">
    <property type="glycosylation" value="2 sites, No reported glycans"/>
</dbReference>
<dbReference type="PaxDb" id="39947-Q65XS5"/>
<dbReference type="EnsemblPlants" id="Os05t0170000-01">
    <property type="protein sequence ID" value="Os05t0170000-01"/>
    <property type="gene ID" value="Os05g0170000"/>
</dbReference>
<dbReference type="EnsemblPlants" id="Os05t0170000-02">
    <property type="protein sequence ID" value="Os05t0170000-02"/>
    <property type="gene ID" value="Os05g0170000"/>
</dbReference>
<dbReference type="GeneID" id="4337935"/>
<dbReference type="Gramene" id="Os05t0170000-01">
    <property type="protein sequence ID" value="Os05t0170000-01"/>
    <property type="gene ID" value="Os05g0170000"/>
</dbReference>
<dbReference type="Gramene" id="Os05t0170000-02">
    <property type="protein sequence ID" value="Os05t0170000-02"/>
    <property type="gene ID" value="Os05g0170000"/>
</dbReference>
<dbReference type="KEGG" id="dosa:Os05g0170000"/>
<dbReference type="KEGG" id="osa:4337935"/>
<dbReference type="eggNOG" id="ENOG502QS7F">
    <property type="taxonomic scope" value="Eukaryota"/>
</dbReference>
<dbReference type="HOGENOM" id="CLU_035559_3_0_1"/>
<dbReference type="InParanoid" id="Q65XS5"/>
<dbReference type="OMA" id="KYCKKKP"/>
<dbReference type="OrthoDB" id="191334at2759"/>
<dbReference type="Proteomes" id="UP000000763">
    <property type="component" value="Chromosome 5"/>
</dbReference>
<dbReference type="Proteomes" id="UP000007752">
    <property type="component" value="Chromosome 5"/>
</dbReference>
<dbReference type="Proteomes" id="UP000059680">
    <property type="component" value="Chromosome 5"/>
</dbReference>
<dbReference type="GO" id="GO:0000139">
    <property type="term" value="C:Golgi membrane"/>
    <property type="evidence" value="ECO:0000314"/>
    <property type="project" value="UniProtKB"/>
</dbReference>
<dbReference type="GO" id="GO:0016757">
    <property type="term" value="F:glycosyltransferase activity"/>
    <property type="evidence" value="ECO:0000314"/>
    <property type="project" value="UniProtKB"/>
</dbReference>
<dbReference type="GO" id="GO:0030244">
    <property type="term" value="P:cellulose biosynthetic process"/>
    <property type="evidence" value="ECO:0007669"/>
    <property type="project" value="UniProtKB-KW"/>
</dbReference>
<dbReference type="GO" id="GO:0009664">
    <property type="term" value="P:plant-type cell wall organization"/>
    <property type="evidence" value="ECO:0000315"/>
    <property type="project" value="UniProtKB"/>
</dbReference>
<dbReference type="InterPro" id="IPR044174">
    <property type="entry name" value="BC10-like"/>
</dbReference>
<dbReference type="InterPro" id="IPR003406">
    <property type="entry name" value="Glyco_trans_14"/>
</dbReference>
<dbReference type="PANTHER" id="PTHR31042">
    <property type="entry name" value="CORE-2/I-BRANCHING BETA-1,6-N-ACETYLGLUCOSAMINYLTRANSFERASE FAMILY PROTEIN-RELATED"/>
    <property type="match status" value="1"/>
</dbReference>
<dbReference type="PANTHER" id="PTHR31042:SF2">
    <property type="entry name" value="GLYCOSYLTRANSFERASE BC10"/>
    <property type="match status" value="1"/>
</dbReference>
<dbReference type="Pfam" id="PF02485">
    <property type="entry name" value="Branch"/>
    <property type="match status" value="1"/>
</dbReference>
<organism>
    <name type="scientific">Oryza sativa subsp. japonica</name>
    <name type="common">Rice</name>
    <dbReference type="NCBI Taxonomy" id="39947"/>
    <lineage>
        <taxon>Eukaryota</taxon>
        <taxon>Viridiplantae</taxon>
        <taxon>Streptophyta</taxon>
        <taxon>Embryophyta</taxon>
        <taxon>Tracheophyta</taxon>
        <taxon>Spermatophyta</taxon>
        <taxon>Magnoliopsida</taxon>
        <taxon>Liliopsida</taxon>
        <taxon>Poales</taxon>
        <taxon>Poaceae</taxon>
        <taxon>BOP clade</taxon>
        <taxon>Oryzoideae</taxon>
        <taxon>Oryzeae</taxon>
        <taxon>Oryzinae</taxon>
        <taxon>Oryza</taxon>
        <taxon>Oryza sativa</taxon>
    </lineage>
</organism>
<name>BC10_ORYSJ</name>
<feature type="chain" id="PRO_0000445726" description="Glycosyltransferase BC10">
    <location>
        <begin position="1"/>
        <end position="399"/>
    </location>
</feature>
<feature type="topological domain" description="Cytoplasmic" evidence="7">
    <location>
        <begin position="1"/>
        <end position="17"/>
    </location>
</feature>
<feature type="transmembrane region" description="Helical; Signal-anchor for type II membrane protein" evidence="6">
    <location>
        <begin position="18"/>
        <end position="38"/>
    </location>
</feature>
<feature type="topological domain" description="Lumenal" evidence="7">
    <location>
        <begin position="39"/>
        <end position="399"/>
    </location>
</feature>
<feature type="glycosylation site" description="N-linked (GlcNAc...) asparagine" evidence="1">
    <location>
        <position position="142"/>
    </location>
</feature>
<feature type="glycosylation site" description="N-linked (GlcNAc...) asparagine" evidence="1">
    <location>
        <position position="188"/>
    </location>
</feature>
<feature type="mutagenesis site" description="In fc116; reduced mechanical strength caused by decreased cellulose content and altered cell wall structure and composition." evidence="3">
    <location>
        <position position="232"/>
    </location>
</feature>
<reference key="1">
    <citation type="journal article" date="2009" name="Plant J.">
        <title>BC10, a DUF266-containing and Golgi-located type II membrane protein, is required for cell-wall biosynthesis in rice (Oryza sativa L.).</title>
        <authorList>
            <person name="Zhou Y."/>
            <person name="Li S."/>
            <person name="Qian Q."/>
            <person name="Zeng D."/>
            <person name="Zhang M."/>
            <person name="Guo L."/>
            <person name="Liu X."/>
            <person name="Zhang B."/>
            <person name="Deng L."/>
            <person name="Liu X."/>
            <person name="Luo G."/>
            <person name="Wang X."/>
            <person name="Li J."/>
        </authorList>
    </citation>
    <scope>NUCLEOTIDE SEQUENCE [GENOMIC DNA]</scope>
    <scope>CATALYTIC ACTIVITY</scope>
    <scope>SUBCELLULAR LOCATION</scope>
    <scope>TOPOLOGY</scope>
    <scope>TISSUE SPECIFICITY</scope>
    <scope>DISRUPTION PHENOTYPE</scope>
</reference>
<reference key="2">
    <citation type="journal article" date="2005" name="Mol. Genet. Genomics">
        <title>A fine physical map of the rice chromosome 5.</title>
        <authorList>
            <person name="Cheng C.-H."/>
            <person name="Chung M.C."/>
            <person name="Liu S.-M."/>
            <person name="Chen S.-K."/>
            <person name="Kao F.Y."/>
            <person name="Lin S.-J."/>
            <person name="Hsiao S.-H."/>
            <person name="Tseng I.C."/>
            <person name="Hsing Y.-I.C."/>
            <person name="Wu H.-P."/>
            <person name="Chen C.-S."/>
            <person name="Shaw J.-F."/>
            <person name="Wu J."/>
            <person name="Matsumoto T."/>
            <person name="Sasaki T."/>
            <person name="Chen H.-C."/>
            <person name="Chow T.-Y."/>
        </authorList>
    </citation>
    <scope>NUCLEOTIDE SEQUENCE [LARGE SCALE GENOMIC DNA]</scope>
    <source>
        <strain>cv. Nipponbare</strain>
    </source>
</reference>
<reference key="3">
    <citation type="journal article" date="2005" name="Nature">
        <title>The map-based sequence of the rice genome.</title>
        <authorList>
            <consortium name="International rice genome sequencing project (IRGSP)"/>
        </authorList>
    </citation>
    <scope>NUCLEOTIDE SEQUENCE [LARGE SCALE GENOMIC DNA]</scope>
    <source>
        <strain>cv. Nipponbare</strain>
    </source>
</reference>
<reference key="4">
    <citation type="journal article" date="2008" name="Nucleic Acids Res.">
        <title>The rice annotation project database (RAP-DB): 2008 update.</title>
        <authorList>
            <consortium name="The rice annotation project (RAP)"/>
        </authorList>
    </citation>
    <scope>GENOME REANNOTATION</scope>
    <source>
        <strain>cv. Nipponbare</strain>
    </source>
</reference>
<reference key="5">
    <citation type="journal article" date="2013" name="Rice">
        <title>Improvement of the Oryza sativa Nipponbare reference genome using next generation sequence and optical map data.</title>
        <authorList>
            <person name="Kawahara Y."/>
            <person name="de la Bastide M."/>
            <person name="Hamilton J.P."/>
            <person name="Kanamori H."/>
            <person name="McCombie W.R."/>
            <person name="Ouyang S."/>
            <person name="Schwartz D.C."/>
            <person name="Tanaka T."/>
            <person name="Wu J."/>
            <person name="Zhou S."/>
            <person name="Childs K.L."/>
            <person name="Davidson R.M."/>
            <person name="Lin H."/>
            <person name="Quesada-Ocampo L."/>
            <person name="Vaillancourt B."/>
            <person name="Sakai H."/>
            <person name="Lee S.S."/>
            <person name="Kim J."/>
            <person name="Numa H."/>
            <person name="Itoh T."/>
            <person name="Buell C.R."/>
            <person name="Matsumoto T."/>
        </authorList>
    </citation>
    <scope>GENOME REANNOTATION</scope>
    <source>
        <strain>cv. Nipponbare</strain>
    </source>
</reference>
<reference key="6">
    <citation type="journal article" date="2005" name="PLoS Biol.">
        <title>The genomes of Oryza sativa: a history of duplications.</title>
        <authorList>
            <person name="Yu J."/>
            <person name="Wang J."/>
            <person name="Lin W."/>
            <person name="Li S."/>
            <person name="Li H."/>
            <person name="Zhou J."/>
            <person name="Ni P."/>
            <person name="Dong W."/>
            <person name="Hu S."/>
            <person name="Zeng C."/>
            <person name="Zhang J."/>
            <person name="Zhang Y."/>
            <person name="Li R."/>
            <person name="Xu Z."/>
            <person name="Li S."/>
            <person name="Li X."/>
            <person name="Zheng H."/>
            <person name="Cong L."/>
            <person name="Lin L."/>
            <person name="Yin J."/>
            <person name="Geng J."/>
            <person name="Li G."/>
            <person name="Shi J."/>
            <person name="Liu J."/>
            <person name="Lv H."/>
            <person name="Li J."/>
            <person name="Wang J."/>
            <person name="Deng Y."/>
            <person name="Ran L."/>
            <person name="Shi X."/>
            <person name="Wang X."/>
            <person name="Wu Q."/>
            <person name="Li C."/>
            <person name="Ren X."/>
            <person name="Wang J."/>
            <person name="Wang X."/>
            <person name="Li D."/>
            <person name="Liu D."/>
            <person name="Zhang X."/>
            <person name="Ji Z."/>
            <person name="Zhao W."/>
            <person name="Sun Y."/>
            <person name="Zhang Z."/>
            <person name="Bao J."/>
            <person name="Han Y."/>
            <person name="Dong L."/>
            <person name="Ji J."/>
            <person name="Chen P."/>
            <person name="Wu S."/>
            <person name="Liu J."/>
            <person name="Xiao Y."/>
            <person name="Bu D."/>
            <person name="Tan J."/>
            <person name="Yang L."/>
            <person name="Ye C."/>
            <person name="Zhang J."/>
            <person name="Xu J."/>
            <person name="Zhou Y."/>
            <person name="Yu Y."/>
            <person name="Zhang B."/>
            <person name="Zhuang S."/>
            <person name="Wei H."/>
            <person name="Liu B."/>
            <person name="Lei M."/>
            <person name="Yu H."/>
            <person name="Li Y."/>
            <person name="Xu H."/>
            <person name="Wei S."/>
            <person name="He X."/>
            <person name="Fang L."/>
            <person name="Zhang Z."/>
            <person name="Zhang Y."/>
            <person name="Huang X."/>
            <person name="Su Z."/>
            <person name="Tong W."/>
            <person name="Li J."/>
            <person name="Tong Z."/>
            <person name="Li S."/>
            <person name="Ye J."/>
            <person name="Wang L."/>
            <person name="Fang L."/>
            <person name="Lei T."/>
            <person name="Chen C.-S."/>
            <person name="Chen H.-C."/>
            <person name="Xu Z."/>
            <person name="Li H."/>
            <person name="Huang H."/>
            <person name="Zhang F."/>
            <person name="Xu H."/>
            <person name="Li N."/>
            <person name="Zhao C."/>
            <person name="Li S."/>
            <person name="Dong L."/>
            <person name="Huang Y."/>
            <person name="Li L."/>
            <person name="Xi Y."/>
            <person name="Qi Q."/>
            <person name="Li W."/>
            <person name="Zhang B."/>
            <person name="Hu W."/>
            <person name="Zhang Y."/>
            <person name="Tian X."/>
            <person name="Jiao Y."/>
            <person name="Liang X."/>
            <person name="Jin J."/>
            <person name="Gao L."/>
            <person name="Zheng W."/>
            <person name="Hao B."/>
            <person name="Liu S.-M."/>
            <person name="Wang W."/>
            <person name="Yuan L."/>
            <person name="Cao M."/>
            <person name="McDermott J."/>
            <person name="Samudrala R."/>
            <person name="Wang J."/>
            <person name="Wong G.K.-S."/>
            <person name="Yang H."/>
        </authorList>
    </citation>
    <scope>NUCLEOTIDE SEQUENCE [LARGE SCALE GENOMIC DNA]</scope>
    <source>
        <strain>cv. Nipponbare</strain>
    </source>
</reference>
<reference key="7">
    <citation type="journal article" date="2003" name="Science">
        <title>Collection, mapping, and annotation of over 28,000 cDNA clones from japonica rice.</title>
        <authorList>
            <consortium name="The rice full-length cDNA consortium"/>
        </authorList>
    </citation>
    <scope>NUCLEOTIDE SEQUENCE [LARGE SCALE MRNA]</scope>
    <source>
        <strain>cv. Nipponbare</strain>
    </source>
</reference>
<reference key="8">
    <citation type="journal article" date="2016" name="Front. Plant Sci.">
        <title>A novel FC116/BC10 mutation distinctively causes alteration in the expression of the genes for cell wall polymer synthesis in rice.</title>
        <authorList>
            <person name="Zhang M."/>
            <person name="Wei F."/>
            <person name="Guo K."/>
            <person name="Hu Z."/>
            <person name="Li Y."/>
            <person name="Xie G."/>
            <person name="Wang Y."/>
            <person name="Cai X."/>
            <person name="Peng L."/>
            <person name="Wang L."/>
        </authorList>
    </citation>
    <scope>FUNCTION</scope>
    <scope>MUTAGENESIS OF TRP-232</scope>
</reference>
<sequence length="399" mass="45170">MKPPRRWMYGRGGGKGKPAGLLLLGVFLCLSVVLLLLLHGSSPSLEGEGRKPEAVEAAGGGGEEEEVAVARAEVEEAPLPPGNARLAFLFIARNRLPLDLVWDAFFRGDKEGRFSIFVHSRPGFVLTRATTRSGFFYNRQVNNSVQVDWGEASMIEAERVLLAHALKDPLNERFVFVSDSCVPLYNFNYTYDYIMSSSTSFVDSFADTKAGRYNPRMDPIIPVENWRKGSQWAVLTRKHAEVVVEDEEVLPEFQKHCRRRPLPEFWRDWDRPIPAEAWKAHNCIPDEHYVQTLLAQHGLEEELTRRSVTHSAWDLSSSKDRERRGWHPVTYKISDATPALVKSIKDIDNIYYETENRKEWCTSNGKPAPCFLFARKFTRAAGLKLLDLSLIAANGASTM</sequence>
<proteinExistence type="evidence at protein level"/>
<gene>
    <name evidence="4" type="primary">BC10</name>
    <name evidence="5" type="synonym">FC116</name>
    <name evidence="9" type="ordered locus">Os05g0170000</name>
    <name evidence="6" type="ordered locus">LOC_Os05g07790</name>
    <name evidence="10" type="ORF">OsJ_17281</name>
    <name evidence="8" type="ORF">P0685E10.4</name>
</gene>